<protein>
    <recommendedName>
        <fullName evidence="1">Phosphatidylglycerol--prolipoprotein diacylglyceryl transferase</fullName>
        <ecNumber evidence="1">2.5.1.145</ecNumber>
    </recommendedName>
</protein>
<gene>
    <name evidence="1" type="primary">lgt</name>
    <name type="ordered locus">SAUSA300_0744</name>
</gene>
<reference key="1">
    <citation type="journal article" date="2006" name="Lancet">
        <title>Complete genome sequence of USA300, an epidemic clone of community-acquired meticillin-resistant Staphylococcus aureus.</title>
        <authorList>
            <person name="Diep B.A."/>
            <person name="Gill S.R."/>
            <person name="Chang R.F."/>
            <person name="Phan T.H."/>
            <person name="Chen J.H."/>
            <person name="Davidson M.G."/>
            <person name="Lin F."/>
            <person name="Lin J."/>
            <person name="Carleton H.A."/>
            <person name="Mongodin E.F."/>
            <person name="Sensabaugh G.F."/>
            <person name="Perdreau-Remington F."/>
        </authorList>
    </citation>
    <scope>NUCLEOTIDE SEQUENCE [LARGE SCALE GENOMIC DNA]</scope>
    <source>
        <strain>USA300</strain>
    </source>
</reference>
<name>LGT_STAA3</name>
<evidence type="ECO:0000255" key="1">
    <source>
        <dbReference type="HAMAP-Rule" id="MF_01147"/>
    </source>
</evidence>
<dbReference type="EC" id="2.5.1.145" evidence="1"/>
<dbReference type="EMBL" id="CP000255">
    <property type="protein sequence ID" value="ABD21762.1"/>
    <property type="molecule type" value="Genomic_DNA"/>
</dbReference>
<dbReference type="RefSeq" id="WP_000513308.1">
    <property type="nucleotide sequence ID" value="NZ_CP027476.1"/>
</dbReference>
<dbReference type="SMR" id="Q2FIN2"/>
<dbReference type="KEGG" id="saa:SAUSA300_0744"/>
<dbReference type="HOGENOM" id="CLU_013386_0_1_9"/>
<dbReference type="OMA" id="SIRWYGL"/>
<dbReference type="UniPathway" id="UPA00664"/>
<dbReference type="Proteomes" id="UP000001939">
    <property type="component" value="Chromosome"/>
</dbReference>
<dbReference type="GO" id="GO:0005886">
    <property type="term" value="C:plasma membrane"/>
    <property type="evidence" value="ECO:0007669"/>
    <property type="project" value="UniProtKB-SubCell"/>
</dbReference>
<dbReference type="GO" id="GO:0008961">
    <property type="term" value="F:phosphatidylglycerol-prolipoprotein diacylglyceryl transferase activity"/>
    <property type="evidence" value="ECO:0007669"/>
    <property type="project" value="UniProtKB-UniRule"/>
</dbReference>
<dbReference type="GO" id="GO:0042158">
    <property type="term" value="P:lipoprotein biosynthetic process"/>
    <property type="evidence" value="ECO:0007669"/>
    <property type="project" value="UniProtKB-UniRule"/>
</dbReference>
<dbReference type="HAMAP" id="MF_01147">
    <property type="entry name" value="Lgt"/>
    <property type="match status" value="1"/>
</dbReference>
<dbReference type="InterPro" id="IPR001640">
    <property type="entry name" value="Lgt"/>
</dbReference>
<dbReference type="NCBIfam" id="TIGR00544">
    <property type="entry name" value="lgt"/>
    <property type="match status" value="1"/>
</dbReference>
<dbReference type="PANTHER" id="PTHR30589:SF0">
    <property type="entry name" value="PHOSPHATIDYLGLYCEROL--PROLIPOPROTEIN DIACYLGLYCERYL TRANSFERASE"/>
    <property type="match status" value="1"/>
</dbReference>
<dbReference type="PANTHER" id="PTHR30589">
    <property type="entry name" value="PROLIPOPROTEIN DIACYLGLYCERYL TRANSFERASE"/>
    <property type="match status" value="1"/>
</dbReference>
<dbReference type="Pfam" id="PF01790">
    <property type="entry name" value="LGT"/>
    <property type="match status" value="1"/>
</dbReference>
<dbReference type="PROSITE" id="PS01311">
    <property type="entry name" value="LGT"/>
    <property type="match status" value="1"/>
</dbReference>
<feature type="chain" id="PRO_1000053504" description="Phosphatidylglycerol--prolipoprotein diacylglyceryl transferase">
    <location>
        <begin position="1"/>
        <end position="279"/>
    </location>
</feature>
<feature type="transmembrane region" description="Helical" evidence="1">
    <location>
        <begin position="18"/>
        <end position="38"/>
    </location>
</feature>
<feature type="transmembrane region" description="Helical" evidence="1">
    <location>
        <begin position="55"/>
        <end position="75"/>
    </location>
</feature>
<feature type="transmembrane region" description="Helical" evidence="1">
    <location>
        <begin position="89"/>
        <end position="109"/>
    </location>
</feature>
<feature type="transmembrane region" description="Helical" evidence="1">
    <location>
        <begin position="203"/>
        <end position="223"/>
    </location>
</feature>
<feature type="transmembrane region" description="Helical" evidence="1">
    <location>
        <begin position="235"/>
        <end position="255"/>
    </location>
</feature>
<feature type="binding site" evidence="1">
    <location>
        <position position="137"/>
    </location>
    <ligand>
        <name>a 1,2-diacyl-sn-glycero-3-phospho-(1'-sn-glycerol)</name>
        <dbReference type="ChEBI" id="CHEBI:64716"/>
    </ligand>
</feature>
<organism>
    <name type="scientific">Staphylococcus aureus (strain USA300)</name>
    <dbReference type="NCBI Taxonomy" id="367830"/>
    <lineage>
        <taxon>Bacteria</taxon>
        <taxon>Bacillati</taxon>
        <taxon>Bacillota</taxon>
        <taxon>Bacilli</taxon>
        <taxon>Bacillales</taxon>
        <taxon>Staphylococcaceae</taxon>
        <taxon>Staphylococcus</taxon>
    </lineage>
</organism>
<accession>Q2FIN2</accession>
<keyword id="KW-1003">Cell membrane</keyword>
<keyword id="KW-0472">Membrane</keyword>
<keyword id="KW-0808">Transferase</keyword>
<keyword id="KW-0812">Transmembrane</keyword>
<keyword id="KW-1133">Transmembrane helix</keyword>
<proteinExistence type="inferred from homology"/>
<comment type="function">
    <text evidence="1">Catalyzes the transfer of the diacylglyceryl group from phosphatidylglycerol to the sulfhydryl group of the N-terminal cysteine of a prolipoprotein, the first step in the formation of mature lipoproteins.</text>
</comment>
<comment type="catalytic activity">
    <reaction evidence="1">
        <text>L-cysteinyl-[prolipoprotein] + a 1,2-diacyl-sn-glycero-3-phospho-(1'-sn-glycerol) = an S-1,2-diacyl-sn-glyceryl-L-cysteinyl-[prolipoprotein] + sn-glycerol 1-phosphate + H(+)</text>
        <dbReference type="Rhea" id="RHEA:56712"/>
        <dbReference type="Rhea" id="RHEA-COMP:14679"/>
        <dbReference type="Rhea" id="RHEA-COMP:14680"/>
        <dbReference type="ChEBI" id="CHEBI:15378"/>
        <dbReference type="ChEBI" id="CHEBI:29950"/>
        <dbReference type="ChEBI" id="CHEBI:57685"/>
        <dbReference type="ChEBI" id="CHEBI:64716"/>
        <dbReference type="ChEBI" id="CHEBI:140658"/>
        <dbReference type="EC" id="2.5.1.145"/>
    </reaction>
</comment>
<comment type="pathway">
    <text evidence="1">Protein modification; lipoprotein biosynthesis (diacylglyceryl transfer).</text>
</comment>
<comment type="subcellular location">
    <subcellularLocation>
        <location evidence="1">Cell membrane</location>
        <topology evidence="1">Multi-pass membrane protein</topology>
    </subcellularLocation>
</comment>
<comment type="similarity">
    <text evidence="1">Belongs to the Lgt family.</text>
</comment>
<sequence length="279" mass="31572">MGIVFNYIDPVAFNLGPLSVRWYGIIIAVGILLGYFVAQRALVKAGLHKDTLVDIIFYSALFGFIAARIYFVIFQWPYYAENPSEIIKIWHGGIAIHGGLIGGFIAGVIVCKVKNLNPFQIGDIVAPSIILAQGIGRWGNFMNHEAHGGSVSRAFLEQLHLPNFIIENMYINGQYYHPTFLYESIWDVAGFIILVNIRKHLKLGETFFLYLTWYSIGRFFIEGLRTDSLMLTSNIRVAQLVSILLILISISLIVYRRIKYNPPLYSKVGALPWPTKKVK</sequence>